<protein>
    <recommendedName>
        <fullName>Tubby-like F-box protein 2</fullName>
        <shortName>OsTLP2</shortName>
    </recommendedName>
    <alternativeName>
        <fullName>Tubby-like F-box protein 12</fullName>
        <shortName>OsTLP12</shortName>
    </alternativeName>
</protein>
<keyword id="KW-1185">Reference proteome</keyword>
<evidence type="ECO:0000256" key="1">
    <source>
        <dbReference type="SAM" id="MobiDB-lite"/>
    </source>
</evidence>
<evidence type="ECO:0000269" key="2">
    <source>
    </source>
</evidence>
<evidence type="ECO:0000305" key="3"/>
<evidence type="ECO:0000312" key="4">
    <source>
        <dbReference type="EMBL" id="EEE55409.1"/>
    </source>
</evidence>
<comment type="tissue specificity">
    <text evidence="2">Expressed in stems, leaves, flowers and seeds.</text>
</comment>
<comment type="similarity">
    <text evidence="3">Belongs to the TUB family.</text>
</comment>
<reference key="1">
    <citation type="journal article" date="2002" name="Nature">
        <title>The genome sequence and structure of rice chromosome 1.</title>
        <authorList>
            <person name="Sasaki T."/>
            <person name="Matsumoto T."/>
            <person name="Yamamoto K."/>
            <person name="Sakata K."/>
            <person name="Baba T."/>
            <person name="Katayose Y."/>
            <person name="Wu J."/>
            <person name="Niimura Y."/>
            <person name="Cheng Z."/>
            <person name="Nagamura Y."/>
            <person name="Antonio B.A."/>
            <person name="Kanamori H."/>
            <person name="Hosokawa S."/>
            <person name="Masukawa M."/>
            <person name="Arikawa K."/>
            <person name="Chiden Y."/>
            <person name="Hayashi M."/>
            <person name="Okamoto M."/>
            <person name="Ando T."/>
            <person name="Aoki H."/>
            <person name="Arita K."/>
            <person name="Hamada M."/>
            <person name="Harada C."/>
            <person name="Hijishita S."/>
            <person name="Honda M."/>
            <person name="Ichikawa Y."/>
            <person name="Idonuma A."/>
            <person name="Iijima M."/>
            <person name="Ikeda M."/>
            <person name="Ikeno M."/>
            <person name="Ito S."/>
            <person name="Ito T."/>
            <person name="Ito Y."/>
            <person name="Ito Y."/>
            <person name="Iwabuchi A."/>
            <person name="Kamiya K."/>
            <person name="Karasawa W."/>
            <person name="Katagiri S."/>
            <person name="Kikuta A."/>
            <person name="Kobayashi N."/>
            <person name="Kono I."/>
            <person name="Machita K."/>
            <person name="Maehara T."/>
            <person name="Mizuno H."/>
            <person name="Mizubayashi T."/>
            <person name="Mukai Y."/>
            <person name="Nagasaki H."/>
            <person name="Nakashima M."/>
            <person name="Nakama Y."/>
            <person name="Nakamichi Y."/>
            <person name="Nakamura M."/>
            <person name="Namiki N."/>
            <person name="Negishi M."/>
            <person name="Ohta I."/>
            <person name="Ono N."/>
            <person name="Saji S."/>
            <person name="Sakai K."/>
            <person name="Shibata M."/>
            <person name="Shimokawa T."/>
            <person name="Shomura A."/>
            <person name="Song J."/>
            <person name="Takazaki Y."/>
            <person name="Terasawa K."/>
            <person name="Tsuji K."/>
            <person name="Waki K."/>
            <person name="Yamagata H."/>
            <person name="Yamane H."/>
            <person name="Yoshiki S."/>
            <person name="Yoshihara R."/>
            <person name="Yukawa K."/>
            <person name="Zhong H."/>
            <person name="Iwama H."/>
            <person name="Endo T."/>
            <person name="Ito H."/>
            <person name="Hahn J.H."/>
            <person name="Kim H.-I."/>
            <person name="Eun M.-Y."/>
            <person name="Yano M."/>
            <person name="Jiang J."/>
            <person name="Gojobori T."/>
        </authorList>
    </citation>
    <scope>NUCLEOTIDE SEQUENCE [LARGE SCALE GENOMIC DNA]</scope>
    <source>
        <strain>cv. Nipponbare</strain>
    </source>
</reference>
<reference key="2">
    <citation type="journal article" date="2005" name="Nature">
        <title>The map-based sequence of the rice genome.</title>
        <authorList>
            <consortium name="International rice genome sequencing project (IRGSP)"/>
        </authorList>
    </citation>
    <scope>NUCLEOTIDE SEQUENCE [LARGE SCALE GENOMIC DNA]</scope>
    <source>
        <strain>cv. Nipponbare</strain>
    </source>
</reference>
<reference key="3">
    <citation type="journal article" date="2008" name="Nucleic Acids Res.">
        <title>The rice annotation project database (RAP-DB): 2008 update.</title>
        <authorList>
            <consortium name="The rice annotation project (RAP)"/>
        </authorList>
    </citation>
    <scope>GENOME REANNOTATION</scope>
    <source>
        <strain>cv. Nipponbare</strain>
    </source>
</reference>
<reference key="4">
    <citation type="journal article" date="2013" name="Rice">
        <title>Improvement of the Oryza sativa Nipponbare reference genome using next generation sequence and optical map data.</title>
        <authorList>
            <person name="Kawahara Y."/>
            <person name="de la Bastide M."/>
            <person name="Hamilton J.P."/>
            <person name="Kanamori H."/>
            <person name="McCombie W.R."/>
            <person name="Ouyang S."/>
            <person name="Schwartz D.C."/>
            <person name="Tanaka T."/>
            <person name="Wu J."/>
            <person name="Zhou S."/>
            <person name="Childs K.L."/>
            <person name="Davidson R.M."/>
            <person name="Lin H."/>
            <person name="Quesada-Ocampo L."/>
            <person name="Vaillancourt B."/>
            <person name="Sakai H."/>
            <person name="Lee S.S."/>
            <person name="Kim J."/>
            <person name="Numa H."/>
            <person name="Itoh T."/>
            <person name="Buell C.R."/>
            <person name="Matsumoto T."/>
        </authorList>
    </citation>
    <scope>GENOME REANNOTATION</scope>
    <source>
        <strain>cv. Nipponbare</strain>
    </source>
</reference>
<reference key="5">
    <citation type="journal article" date="2005" name="PLoS Biol.">
        <title>The genomes of Oryza sativa: a history of duplications.</title>
        <authorList>
            <person name="Yu J."/>
            <person name="Wang J."/>
            <person name="Lin W."/>
            <person name="Li S."/>
            <person name="Li H."/>
            <person name="Zhou J."/>
            <person name="Ni P."/>
            <person name="Dong W."/>
            <person name="Hu S."/>
            <person name="Zeng C."/>
            <person name="Zhang J."/>
            <person name="Zhang Y."/>
            <person name="Li R."/>
            <person name="Xu Z."/>
            <person name="Li S."/>
            <person name="Li X."/>
            <person name="Zheng H."/>
            <person name="Cong L."/>
            <person name="Lin L."/>
            <person name="Yin J."/>
            <person name="Geng J."/>
            <person name="Li G."/>
            <person name="Shi J."/>
            <person name="Liu J."/>
            <person name="Lv H."/>
            <person name="Li J."/>
            <person name="Wang J."/>
            <person name="Deng Y."/>
            <person name="Ran L."/>
            <person name="Shi X."/>
            <person name="Wang X."/>
            <person name="Wu Q."/>
            <person name="Li C."/>
            <person name="Ren X."/>
            <person name="Wang J."/>
            <person name="Wang X."/>
            <person name="Li D."/>
            <person name="Liu D."/>
            <person name="Zhang X."/>
            <person name="Ji Z."/>
            <person name="Zhao W."/>
            <person name="Sun Y."/>
            <person name="Zhang Z."/>
            <person name="Bao J."/>
            <person name="Han Y."/>
            <person name="Dong L."/>
            <person name="Ji J."/>
            <person name="Chen P."/>
            <person name="Wu S."/>
            <person name="Liu J."/>
            <person name="Xiao Y."/>
            <person name="Bu D."/>
            <person name="Tan J."/>
            <person name="Yang L."/>
            <person name="Ye C."/>
            <person name="Zhang J."/>
            <person name="Xu J."/>
            <person name="Zhou Y."/>
            <person name="Yu Y."/>
            <person name="Zhang B."/>
            <person name="Zhuang S."/>
            <person name="Wei H."/>
            <person name="Liu B."/>
            <person name="Lei M."/>
            <person name="Yu H."/>
            <person name="Li Y."/>
            <person name="Xu H."/>
            <person name="Wei S."/>
            <person name="He X."/>
            <person name="Fang L."/>
            <person name="Zhang Z."/>
            <person name="Zhang Y."/>
            <person name="Huang X."/>
            <person name="Su Z."/>
            <person name="Tong W."/>
            <person name="Li J."/>
            <person name="Tong Z."/>
            <person name="Li S."/>
            <person name="Ye J."/>
            <person name="Wang L."/>
            <person name="Fang L."/>
            <person name="Lei T."/>
            <person name="Chen C.-S."/>
            <person name="Chen H.-C."/>
            <person name="Xu Z."/>
            <person name="Li H."/>
            <person name="Huang H."/>
            <person name="Zhang F."/>
            <person name="Xu H."/>
            <person name="Li N."/>
            <person name="Zhao C."/>
            <person name="Li S."/>
            <person name="Dong L."/>
            <person name="Huang Y."/>
            <person name="Li L."/>
            <person name="Xi Y."/>
            <person name="Qi Q."/>
            <person name="Li W."/>
            <person name="Zhang B."/>
            <person name="Hu W."/>
            <person name="Zhang Y."/>
            <person name="Tian X."/>
            <person name="Jiao Y."/>
            <person name="Liang X."/>
            <person name="Jin J."/>
            <person name="Gao L."/>
            <person name="Zheng W."/>
            <person name="Hao B."/>
            <person name="Liu S.-M."/>
            <person name="Wang W."/>
            <person name="Yuan L."/>
            <person name="Cao M."/>
            <person name="McDermott J."/>
            <person name="Samudrala R."/>
            <person name="Wang J."/>
            <person name="Wong G.K.-S."/>
            <person name="Yang H."/>
        </authorList>
    </citation>
    <scope>NUCLEOTIDE SEQUENCE [LARGE SCALE GENOMIC DNA]</scope>
    <source>
        <strain>cv. Nipponbare</strain>
    </source>
</reference>
<reference key="6">
    <citation type="journal article" date="2003" name="Science">
        <title>Collection, mapping, and annotation of over 28,000 cDNA clones from japonica rice.</title>
        <authorList>
            <consortium name="The rice full-length cDNA consortium"/>
        </authorList>
    </citation>
    <scope>NUCLEOTIDE SEQUENCE [LARGE SCALE MRNA]</scope>
    <source>
        <strain>cv. Nipponbare</strain>
    </source>
</reference>
<reference key="7">
    <citation type="journal article" date="2008" name="FEBS J.">
        <title>Identification of rice TUBBY-like genes and their evolution.</title>
        <authorList>
            <person name="Liu Q."/>
        </authorList>
    </citation>
    <scope>GENE FAMILY</scope>
    <scope>NOMENCLATURE</scope>
</reference>
<reference key="8">
    <citation type="journal article" date="2008" name="Genomics">
        <title>Genomewide comparative phylogenetic and molecular evolutionary analysis of tubby-like protein family in Arabidopsis, rice, and poplar.</title>
        <authorList>
            <person name="Yang Z."/>
            <person name="Zhou Y."/>
            <person name="Wang X."/>
            <person name="Gu S."/>
            <person name="Yu J."/>
            <person name="Liang G."/>
            <person name="Yan C."/>
            <person name="Xu C."/>
        </authorList>
    </citation>
    <scope>TISSUE SPECIFICITY</scope>
    <scope>GENE FAMILY</scope>
    <scope>NOMENCLATURE</scope>
</reference>
<dbReference type="EMBL" id="AP003256">
    <property type="protein sequence ID" value="BAB61197.1"/>
    <property type="molecule type" value="Genomic_DNA"/>
</dbReference>
<dbReference type="EMBL" id="AP003409">
    <property type="protein sequence ID" value="BAB90233.1"/>
    <property type="molecule type" value="Genomic_DNA"/>
</dbReference>
<dbReference type="EMBL" id="AP008207">
    <property type="protein sequence ID" value="BAF06222.1"/>
    <property type="molecule type" value="Genomic_DNA"/>
</dbReference>
<dbReference type="EMBL" id="AP014957">
    <property type="protein sequence ID" value="BAS74438.1"/>
    <property type="molecule type" value="Genomic_DNA"/>
</dbReference>
<dbReference type="EMBL" id="CM000138">
    <property type="protein sequence ID" value="EEE55409.1"/>
    <property type="molecule type" value="Genomic_DNA"/>
</dbReference>
<dbReference type="EMBL" id="AK106853">
    <property type="protein sequence ID" value="BAG97855.1"/>
    <property type="molecule type" value="mRNA"/>
</dbReference>
<dbReference type="RefSeq" id="XP_015635936.1">
    <property type="nucleotide sequence ID" value="XM_015780450.1"/>
</dbReference>
<dbReference type="SMR" id="Q94DT9"/>
<dbReference type="FunCoup" id="Q94DT9">
    <property type="interactions" value="1172"/>
</dbReference>
<dbReference type="STRING" id="39947.Q94DT9"/>
<dbReference type="PaxDb" id="39947-Q94DT9"/>
<dbReference type="EnsemblPlants" id="Os01t0759100-01">
    <property type="protein sequence ID" value="Os01t0759100-01"/>
    <property type="gene ID" value="Os01g0759100"/>
</dbReference>
<dbReference type="Gramene" id="Os01t0759100-01">
    <property type="protein sequence ID" value="Os01t0759100-01"/>
    <property type="gene ID" value="Os01g0759100"/>
</dbReference>
<dbReference type="KEGG" id="dosa:Os01g0759100"/>
<dbReference type="eggNOG" id="KOG2502">
    <property type="taxonomic scope" value="Eukaryota"/>
</dbReference>
<dbReference type="HOGENOM" id="CLU_028236_3_0_1"/>
<dbReference type="InParanoid" id="Q94DT9"/>
<dbReference type="OMA" id="PSWHEHL"/>
<dbReference type="OrthoDB" id="8775810at2759"/>
<dbReference type="Proteomes" id="UP000000763">
    <property type="component" value="Chromosome 1"/>
</dbReference>
<dbReference type="Proteomes" id="UP000007752">
    <property type="component" value="Chromosome 1"/>
</dbReference>
<dbReference type="Proteomes" id="UP000059680">
    <property type="component" value="Chromosome 1"/>
</dbReference>
<dbReference type="Gene3D" id="1.20.1280.50">
    <property type="match status" value="1"/>
</dbReference>
<dbReference type="Gene3D" id="3.20.90.10">
    <property type="entry name" value="Tubby Protein, Chain A"/>
    <property type="match status" value="1"/>
</dbReference>
<dbReference type="InterPro" id="IPR036047">
    <property type="entry name" value="F-box-like_dom_sf"/>
</dbReference>
<dbReference type="InterPro" id="IPR025659">
    <property type="entry name" value="Tubby-like_C"/>
</dbReference>
<dbReference type="InterPro" id="IPR000007">
    <property type="entry name" value="Tubby_C"/>
</dbReference>
<dbReference type="PANTHER" id="PTHR16517:SF150">
    <property type="entry name" value="TUBBY-LIKE F-BOX PROTEIN 2"/>
    <property type="match status" value="1"/>
</dbReference>
<dbReference type="PANTHER" id="PTHR16517">
    <property type="entry name" value="TUBBY-RELATED"/>
    <property type="match status" value="1"/>
</dbReference>
<dbReference type="Pfam" id="PF01167">
    <property type="entry name" value="Tub"/>
    <property type="match status" value="1"/>
</dbReference>
<dbReference type="PRINTS" id="PR01573">
    <property type="entry name" value="SUPERTUBBY"/>
</dbReference>
<dbReference type="SUPFAM" id="SSF81383">
    <property type="entry name" value="F-box domain"/>
    <property type="match status" value="1"/>
</dbReference>
<dbReference type="SUPFAM" id="SSF54518">
    <property type="entry name" value="Tubby C-terminal domain-like"/>
    <property type="match status" value="1"/>
</dbReference>
<organism>
    <name type="scientific">Oryza sativa subsp. japonica</name>
    <name type="common">Rice</name>
    <dbReference type="NCBI Taxonomy" id="39947"/>
    <lineage>
        <taxon>Eukaryota</taxon>
        <taxon>Viridiplantae</taxon>
        <taxon>Streptophyta</taxon>
        <taxon>Embryophyta</taxon>
        <taxon>Tracheophyta</taxon>
        <taxon>Spermatophyta</taxon>
        <taxon>Magnoliopsida</taxon>
        <taxon>Liliopsida</taxon>
        <taxon>Poales</taxon>
        <taxon>Poaceae</taxon>
        <taxon>BOP clade</taxon>
        <taxon>Oryzoideae</taxon>
        <taxon>Oryzeae</taxon>
        <taxon>Oryzinae</taxon>
        <taxon>Oryza</taxon>
        <taxon>Oryza sativa</taxon>
    </lineage>
</organism>
<proteinExistence type="evidence at transcript level"/>
<sequence>MVPWRRSSSSSSAPSSRPARRPARTNARVSPDVSSELSPLAGEEGAGEERWSALVPDLLADILRCVEAGSERWPPRRDVVACASVCRRWRDVAVAVVQPPLESGKITFPSSLKQPGPRDAPMQCFIKRNKKNSTFFLYLGLTQELTDDEKFLLAARRCRRGLHKEYAITINSDGLFHGSQSCVGNLKSNFTGTKFTIRDWQPPYEGAKAFSSRSGRWFGNKHRCPLVSTGDVEVGEVSYKYSLLRPRGPRRMSCSVQCPVLKGTAVDPQDGKRLSNSIPSSLVLNSKVPSWHEHLQCWCLNFHGRVMVASVKNFQLIAPVEPGEPSDKTVVLQFGKIDDDVFTMDYRQPLSAFQAFAICLSNFGTKLA</sequence>
<accession>Q94DT9</accession>
<accession>B7EZQ8</accession>
<feature type="chain" id="PRO_0000351121" description="Tubby-like F-box protein 2">
    <location>
        <begin position="1"/>
        <end position="368"/>
    </location>
</feature>
<feature type="domain" description="F-box">
    <location>
        <begin position="49"/>
        <end position="104"/>
    </location>
</feature>
<feature type="region of interest" description="Disordered" evidence="1">
    <location>
        <begin position="1"/>
        <end position="44"/>
    </location>
</feature>
<feature type="compositionally biased region" description="Low complexity" evidence="1">
    <location>
        <begin position="1"/>
        <end position="17"/>
    </location>
</feature>
<name>TLP2_ORYSJ</name>
<gene>
    <name type="primary">TULP2</name>
    <name type="synonym">TULP12</name>
    <name type="ordered locus">Os01g0759100</name>
    <name type="ordered locus">LOC_Os01g55430</name>
    <name type="ORF">B1131G08.31</name>
    <name evidence="4" type="ORF">OsJ_03520</name>
    <name type="ORF">P0460E08.4</name>
</gene>